<gene>
    <name evidence="1" type="primary">rplO</name>
    <name type="ordered locus">RP640</name>
</gene>
<accession>Q9ZCS4</accession>
<sequence length="150" mass="16429">MKLNELYNNLGAKKNKKRIARGIGSGKGKTAGRGIKGQKSRSGVAIKGFEGGQTPMIKRLPKRGFKCISTKKYNIINIYNIEEALTDGRLSTNDIITKEKLLEVGLINNKNLVKLLSICSDDFASPLSLKLDAYSSKAKYLIEKVGGQLL</sequence>
<dbReference type="EMBL" id="AJ235272">
    <property type="protein sequence ID" value="CAA15080.1"/>
    <property type="molecule type" value="Genomic_DNA"/>
</dbReference>
<dbReference type="PIR" id="F71669">
    <property type="entry name" value="F71669"/>
</dbReference>
<dbReference type="RefSeq" id="NP_221004.1">
    <property type="nucleotide sequence ID" value="NC_000963.1"/>
</dbReference>
<dbReference type="RefSeq" id="WP_010886338.1">
    <property type="nucleotide sequence ID" value="NC_000963.1"/>
</dbReference>
<dbReference type="SMR" id="Q9ZCS4"/>
<dbReference type="STRING" id="272947.gene:17555717"/>
<dbReference type="EnsemblBacteria" id="CAA15080">
    <property type="protein sequence ID" value="CAA15080"/>
    <property type="gene ID" value="CAA15080"/>
</dbReference>
<dbReference type="GeneID" id="57569765"/>
<dbReference type="KEGG" id="rpr:RP640"/>
<dbReference type="PATRIC" id="fig|272947.5.peg.662"/>
<dbReference type="eggNOG" id="COG0200">
    <property type="taxonomic scope" value="Bacteria"/>
</dbReference>
<dbReference type="HOGENOM" id="CLU_055188_4_0_5"/>
<dbReference type="OrthoDB" id="9810293at2"/>
<dbReference type="Proteomes" id="UP000002480">
    <property type="component" value="Chromosome"/>
</dbReference>
<dbReference type="GO" id="GO:0015934">
    <property type="term" value="C:large ribosomal subunit"/>
    <property type="evidence" value="ECO:0007669"/>
    <property type="project" value="InterPro"/>
</dbReference>
<dbReference type="GO" id="GO:0019843">
    <property type="term" value="F:rRNA binding"/>
    <property type="evidence" value="ECO:0007669"/>
    <property type="project" value="UniProtKB-UniRule"/>
</dbReference>
<dbReference type="GO" id="GO:0003735">
    <property type="term" value="F:structural constituent of ribosome"/>
    <property type="evidence" value="ECO:0007669"/>
    <property type="project" value="InterPro"/>
</dbReference>
<dbReference type="GO" id="GO:0006412">
    <property type="term" value="P:translation"/>
    <property type="evidence" value="ECO:0007669"/>
    <property type="project" value="UniProtKB-UniRule"/>
</dbReference>
<dbReference type="Gene3D" id="3.100.10.10">
    <property type="match status" value="1"/>
</dbReference>
<dbReference type="HAMAP" id="MF_01341">
    <property type="entry name" value="Ribosomal_uL15"/>
    <property type="match status" value="1"/>
</dbReference>
<dbReference type="InterPro" id="IPR030878">
    <property type="entry name" value="Ribosomal_uL15"/>
</dbReference>
<dbReference type="InterPro" id="IPR021131">
    <property type="entry name" value="Ribosomal_uL15/eL18"/>
</dbReference>
<dbReference type="InterPro" id="IPR036227">
    <property type="entry name" value="Ribosomal_uL15/eL18_sf"/>
</dbReference>
<dbReference type="InterPro" id="IPR005749">
    <property type="entry name" value="Ribosomal_uL15_bac-type"/>
</dbReference>
<dbReference type="NCBIfam" id="TIGR01071">
    <property type="entry name" value="rplO_bact"/>
    <property type="match status" value="1"/>
</dbReference>
<dbReference type="PANTHER" id="PTHR12934">
    <property type="entry name" value="50S RIBOSOMAL PROTEIN L15"/>
    <property type="match status" value="1"/>
</dbReference>
<dbReference type="PANTHER" id="PTHR12934:SF11">
    <property type="entry name" value="LARGE RIBOSOMAL SUBUNIT PROTEIN UL15M"/>
    <property type="match status" value="1"/>
</dbReference>
<dbReference type="Pfam" id="PF00828">
    <property type="entry name" value="Ribosomal_L27A"/>
    <property type="match status" value="1"/>
</dbReference>
<dbReference type="SUPFAM" id="SSF52080">
    <property type="entry name" value="Ribosomal proteins L15p and L18e"/>
    <property type="match status" value="1"/>
</dbReference>
<organism>
    <name type="scientific">Rickettsia prowazekii (strain Madrid E)</name>
    <dbReference type="NCBI Taxonomy" id="272947"/>
    <lineage>
        <taxon>Bacteria</taxon>
        <taxon>Pseudomonadati</taxon>
        <taxon>Pseudomonadota</taxon>
        <taxon>Alphaproteobacteria</taxon>
        <taxon>Rickettsiales</taxon>
        <taxon>Rickettsiaceae</taxon>
        <taxon>Rickettsieae</taxon>
        <taxon>Rickettsia</taxon>
        <taxon>typhus group</taxon>
    </lineage>
</organism>
<reference key="1">
    <citation type="journal article" date="1998" name="Nature">
        <title>The genome sequence of Rickettsia prowazekii and the origin of mitochondria.</title>
        <authorList>
            <person name="Andersson S.G.E."/>
            <person name="Zomorodipour A."/>
            <person name="Andersson J.O."/>
            <person name="Sicheritz-Ponten T."/>
            <person name="Alsmark U.C.M."/>
            <person name="Podowski R.M."/>
            <person name="Naeslund A.K."/>
            <person name="Eriksson A.-S."/>
            <person name="Winkler H.H."/>
            <person name="Kurland C.G."/>
        </authorList>
    </citation>
    <scope>NUCLEOTIDE SEQUENCE [LARGE SCALE GENOMIC DNA]</scope>
    <source>
        <strain>Madrid E</strain>
    </source>
</reference>
<feature type="chain" id="PRO_0000104797" description="Large ribosomal subunit protein uL15">
    <location>
        <begin position="1"/>
        <end position="150"/>
    </location>
</feature>
<evidence type="ECO:0000255" key="1">
    <source>
        <dbReference type="HAMAP-Rule" id="MF_01341"/>
    </source>
</evidence>
<evidence type="ECO:0000305" key="2"/>
<comment type="function">
    <text evidence="1">Binds to the 23S rRNA.</text>
</comment>
<comment type="subunit">
    <text evidence="1">Part of the 50S ribosomal subunit.</text>
</comment>
<comment type="similarity">
    <text evidence="1">Belongs to the universal ribosomal protein uL15 family.</text>
</comment>
<protein>
    <recommendedName>
        <fullName evidence="1">Large ribosomal subunit protein uL15</fullName>
    </recommendedName>
    <alternativeName>
        <fullName evidence="2">50S ribosomal protein L15</fullName>
    </alternativeName>
</protein>
<name>RL15_RICPR</name>
<keyword id="KW-1185">Reference proteome</keyword>
<keyword id="KW-0687">Ribonucleoprotein</keyword>
<keyword id="KW-0689">Ribosomal protein</keyword>
<keyword id="KW-0694">RNA-binding</keyword>
<keyword id="KW-0699">rRNA-binding</keyword>
<proteinExistence type="inferred from homology"/>